<gene>
    <name evidence="3" type="primary">CDC42EP1</name>
    <name evidence="3" type="synonym">BORG5</name>
</gene>
<keyword id="KW-0133">Cell shape</keyword>
<keyword id="KW-0963">Cytoplasm</keyword>
<keyword id="KW-0206">Cytoskeleton</keyword>
<keyword id="KW-0472">Membrane</keyword>
<keyword id="KW-0488">Methylation</keyword>
<keyword id="KW-0597">Phosphoprotein</keyword>
<keyword id="KW-1185">Reference proteome</keyword>
<keyword id="KW-0677">Repeat</keyword>
<accession>Q17QW1</accession>
<protein>
    <recommendedName>
        <fullName>Cdc42 effector protein 1</fullName>
    </recommendedName>
    <alternativeName>
        <fullName>Binder of Rho GTPases 5</fullName>
    </alternativeName>
</protein>
<dbReference type="EMBL" id="BC118148">
    <property type="protein sequence ID" value="AAI18149.1"/>
    <property type="molecule type" value="mRNA"/>
</dbReference>
<dbReference type="RefSeq" id="NP_001068963.1">
    <property type="nucleotide sequence ID" value="NM_001075495.1"/>
</dbReference>
<dbReference type="FunCoup" id="Q17QW1">
    <property type="interactions" value="171"/>
</dbReference>
<dbReference type="STRING" id="9913.ENSBTAP00000028798"/>
<dbReference type="PaxDb" id="9913-ENSBTAP00000028798"/>
<dbReference type="Ensembl" id="ENSBTAT00000028798.5">
    <property type="protein sequence ID" value="ENSBTAP00000028798.3"/>
    <property type="gene ID" value="ENSBTAG00000030258.3"/>
</dbReference>
<dbReference type="GeneID" id="511099"/>
<dbReference type="KEGG" id="bta:511099"/>
<dbReference type="CTD" id="11135"/>
<dbReference type="VEuPathDB" id="HostDB:ENSBTAG00000030258"/>
<dbReference type="VGNC" id="VGNC:27072">
    <property type="gene designation" value="CDC42EP1"/>
</dbReference>
<dbReference type="eggNOG" id="ENOG502RZ2H">
    <property type="taxonomic scope" value="Eukaryota"/>
</dbReference>
<dbReference type="GeneTree" id="ENSGT00940000160068"/>
<dbReference type="HOGENOM" id="CLU_787446_0_0_1"/>
<dbReference type="InParanoid" id="Q17QW1"/>
<dbReference type="OMA" id="SWESQDE"/>
<dbReference type="OrthoDB" id="9887345at2759"/>
<dbReference type="TreeFam" id="TF331725"/>
<dbReference type="Reactome" id="R-BTA-9013149">
    <property type="pathway name" value="RAC1 GTPase cycle"/>
</dbReference>
<dbReference type="Reactome" id="R-BTA-9013404">
    <property type="pathway name" value="RAC2 GTPase cycle"/>
</dbReference>
<dbReference type="Reactome" id="R-BTA-9013406">
    <property type="pathway name" value="RHOQ GTPase cycle"/>
</dbReference>
<dbReference type="Reactome" id="R-BTA-9013408">
    <property type="pathway name" value="RHOG GTPase cycle"/>
</dbReference>
<dbReference type="Reactome" id="R-BTA-9013423">
    <property type="pathway name" value="RAC3 GTPase cycle"/>
</dbReference>
<dbReference type="Proteomes" id="UP000009136">
    <property type="component" value="Chromosome 5"/>
</dbReference>
<dbReference type="Bgee" id="ENSBTAG00000030258">
    <property type="expression patterns" value="Expressed in urinary bladder and 100 other cell types or tissues"/>
</dbReference>
<dbReference type="GO" id="GO:0005737">
    <property type="term" value="C:cytoplasm"/>
    <property type="evidence" value="ECO:0000318"/>
    <property type="project" value="GO_Central"/>
</dbReference>
<dbReference type="GO" id="GO:0005856">
    <property type="term" value="C:cytoskeleton"/>
    <property type="evidence" value="ECO:0000318"/>
    <property type="project" value="GO_Central"/>
</dbReference>
<dbReference type="GO" id="GO:0012505">
    <property type="term" value="C:endomembrane system"/>
    <property type="evidence" value="ECO:0007669"/>
    <property type="project" value="UniProtKB-SubCell"/>
</dbReference>
<dbReference type="GO" id="GO:0005886">
    <property type="term" value="C:plasma membrane"/>
    <property type="evidence" value="ECO:0000318"/>
    <property type="project" value="GO_Central"/>
</dbReference>
<dbReference type="GO" id="GO:0031267">
    <property type="term" value="F:small GTPase binding"/>
    <property type="evidence" value="ECO:0000318"/>
    <property type="project" value="GO_Central"/>
</dbReference>
<dbReference type="GO" id="GO:0030838">
    <property type="term" value="P:positive regulation of actin filament polymerization"/>
    <property type="evidence" value="ECO:0000318"/>
    <property type="project" value="GO_Central"/>
</dbReference>
<dbReference type="GO" id="GO:0031274">
    <property type="term" value="P:positive regulation of pseudopodium assembly"/>
    <property type="evidence" value="ECO:0000318"/>
    <property type="project" value="GO_Central"/>
</dbReference>
<dbReference type="GO" id="GO:0008360">
    <property type="term" value="P:regulation of cell shape"/>
    <property type="evidence" value="ECO:0000318"/>
    <property type="project" value="GO_Central"/>
</dbReference>
<dbReference type="GO" id="GO:0007266">
    <property type="term" value="P:Rho protein signal transduction"/>
    <property type="evidence" value="ECO:0000318"/>
    <property type="project" value="GO_Central"/>
</dbReference>
<dbReference type="InterPro" id="IPR029273">
    <property type="entry name" value="Cdc42_effect-like"/>
</dbReference>
<dbReference type="InterPro" id="IPR051296">
    <property type="entry name" value="Cdc42_Effector_BORG/CEP"/>
</dbReference>
<dbReference type="InterPro" id="IPR000095">
    <property type="entry name" value="CRIB_dom"/>
</dbReference>
<dbReference type="PANTHER" id="PTHR15344:SF7">
    <property type="entry name" value="CDC42 EFFECTOR PROTEIN 1"/>
    <property type="match status" value="1"/>
</dbReference>
<dbReference type="PANTHER" id="PTHR15344">
    <property type="entry name" value="CDC42 EFFECTOR PROTEIN BORG"/>
    <property type="match status" value="1"/>
</dbReference>
<dbReference type="Pfam" id="PF14957">
    <property type="entry name" value="BORG_CEP"/>
    <property type="match status" value="1"/>
</dbReference>
<dbReference type="Pfam" id="PF00786">
    <property type="entry name" value="PBD"/>
    <property type="match status" value="1"/>
</dbReference>
<dbReference type="SMART" id="SM00285">
    <property type="entry name" value="PBD"/>
    <property type="match status" value="1"/>
</dbReference>
<dbReference type="PROSITE" id="PS50108">
    <property type="entry name" value="CRIB"/>
    <property type="match status" value="1"/>
</dbReference>
<name>BORG5_BOVIN</name>
<organism>
    <name type="scientific">Bos taurus</name>
    <name type="common">Bovine</name>
    <dbReference type="NCBI Taxonomy" id="9913"/>
    <lineage>
        <taxon>Eukaryota</taxon>
        <taxon>Metazoa</taxon>
        <taxon>Chordata</taxon>
        <taxon>Craniata</taxon>
        <taxon>Vertebrata</taxon>
        <taxon>Euteleostomi</taxon>
        <taxon>Mammalia</taxon>
        <taxon>Eutheria</taxon>
        <taxon>Laurasiatheria</taxon>
        <taxon>Artiodactyla</taxon>
        <taxon>Ruminantia</taxon>
        <taxon>Pecora</taxon>
        <taxon>Bovidae</taxon>
        <taxon>Bovinae</taxon>
        <taxon>Bos</taxon>
    </lineage>
</organism>
<proteinExistence type="evidence at transcript level"/>
<sequence>MPGPQGAGGAPAMNLGKLSPVGWVSSSQGKKRLTADMISPPLGDFRHTMHVGRGGDVFGDTSFLSNHGGGSGSTHRSPRGFLAKKLQLVRRVGAPPRRMASPPAPSPAPPAISPIIKNAISLPQLNQAAYDSLVVGKLSFDRSPASSTDGHSAYGLDSGFCTISRLPRPEKPRDRDRDSSFPAEPELRRSDSLLSFRLDLDLGPSLLTELLGAMSLSEGSAAETPAPAPAASPPASVANPPAPASSPSLRGRCPNGVTTRLGPVAEARASVVGEGPRAPADEGPGKHRGAVSGGSQSRHHYTEVDARAEGLGALSQARASWGSLDEEWGASQAGSRTPVPSTVQANTFEFADAEEDDEVKV</sequence>
<feature type="chain" id="PRO_0000278119" description="Cdc42 effector protein 1">
    <location>
        <begin position="1"/>
        <end position="361"/>
    </location>
</feature>
<feature type="domain" description="CRIB" evidence="6">
    <location>
        <begin position="38"/>
        <end position="52"/>
    </location>
</feature>
<feature type="repeat" description="1" evidence="5">
    <location>
        <begin position="220"/>
        <end position="226"/>
    </location>
</feature>
<feature type="repeat" description="2" evidence="5">
    <location>
        <begin position="229"/>
        <end position="235"/>
    </location>
</feature>
<feature type="repeat" description="3" evidence="5">
    <location>
        <begin position="236"/>
        <end position="242"/>
    </location>
</feature>
<feature type="repeat" description="4" evidence="5">
    <location>
        <begin position="243"/>
        <end position="249"/>
    </location>
</feature>
<feature type="region of interest" description="Disordered" evidence="7">
    <location>
        <begin position="1"/>
        <end position="29"/>
    </location>
</feature>
<feature type="region of interest" description="Disordered" evidence="7">
    <location>
        <begin position="161"/>
        <end position="186"/>
    </location>
</feature>
<feature type="region of interest" description="Disordered" evidence="7">
    <location>
        <begin position="218"/>
        <end position="300"/>
    </location>
</feature>
<feature type="region of interest" description="4 X 7 AA tandem repeats of [PT]-[AT]-A-[ENT]-[PT]-[PTS]-[AG]" evidence="5">
    <location>
        <begin position="220"/>
        <end position="249"/>
    </location>
</feature>
<feature type="region of interest" description="Disordered" evidence="7">
    <location>
        <begin position="320"/>
        <end position="361"/>
    </location>
</feature>
<feature type="compositionally biased region" description="Basic and acidic residues" evidence="7">
    <location>
        <begin position="167"/>
        <end position="186"/>
    </location>
</feature>
<feature type="compositionally biased region" description="Polar residues" evidence="7">
    <location>
        <begin position="332"/>
        <end position="347"/>
    </location>
</feature>
<feature type="compositionally biased region" description="Acidic residues" evidence="7">
    <location>
        <begin position="351"/>
        <end position="361"/>
    </location>
</feature>
<feature type="modified residue" description="Phosphoserine" evidence="3">
    <location>
        <position position="19"/>
    </location>
</feature>
<feature type="modified residue" description="Phosphoserine" evidence="3">
    <location>
        <position position="27"/>
    </location>
</feature>
<feature type="modified residue" description="Phosphothreonine" evidence="4">
    <location>
        <position position="34"/>
    </location>
</feature>
<feature type="modified residue" description="Phosphoserine" evidence="4">
    <location>
        <position position="39"/>
    </location>
</feature>
<feature type="modified residue" description="Omega-N-methylarginine" evidence="3">
    <location>
        <position position="53"/>
    </location>
</feature>
<feature type="modified residue" description="Phosphoserine" evidence="3">
    <location>
        <position position="65"/>
    </location>
</feature>
<feature type="modified residue" description="Phosphoserine" evidence="3">
    <location>
        <position position="73"/>
    </location>
</feature>
<feature type="modified residue" description="Phosphoserine" evidence="3">
    <location>
        <position position="77"/>
    </location>
</feature>
<feature type="modified residue" description="Phosphoserine" evidence="3">
    <location>
        <position position="101"/>
    </location>
</feature>
<feature type="modified residue" description="Phosphoserine" evidence="3">
    <location>
        <position position="113"/>
    </location>
</feature>
<feature type="modified residue" description="Phosphoserine" evidence="3">
    <location>
        <position position="121"/>
    </location>
</feature>
<feature type="modified residue" description="Phosphoserine" evidence="4">
    <location>
        <position position="139"/>
    </location>
</feature>
<feature type="modified residue" description="Phosphoserine" evidence="3">
    <location>
        <position position="180"/>
    </location>
</feature>
<feature type="modified residue" description="Phosphoserine" evidence="3">
    <location>
        <position position="190"/>
    </location>
</feature>
<feature type="modified residue" description="Phosphoserine" evidence="3">
    <location>
        <position position="192"/>
    </location>
</feature>
<feature type="modified residue" description="Phosphoserine" evidence="3">
    <location>
        <position position="195"/>
    </location>
</feature>
<feature type="modified residue" description="Phosphoserine" evidence="2">
    <location>
        <position position="270"/>
    </location>
</feature>
<feature type="modified residue" description="Phosphoserine" evidence="3">
    <location>
        <position position="320"/>
    </location>
</feature>
<feature type="modified residue" description="Phosphoserine" evidence="3">
    <location>
        <position position="323"/>
    </location>
</feature>
<evidence type="ECO:0000250" key="1"/>
<evidence type="ECO:0000250" key="2">
    <source>
        <dbReference type="UniProtKB" id="A1A5P0"/>
    </source>
</evidence>
<evidence type="ECO:0000250" key="3">
    <source>
        <dbReference type="UniProtKB" id="Q00587"/>
    </source>
</evidence>
<evidence type="ECO:0000250" key="4">
    <source>
        <dbReference type="UniProtKB" id="Q91W92"/>
    </source>
</evidence>
<evidence type="ECO:0000255" key="5"/>
<evidence type="ECO:0000255" key="6">
    <source>
        <dbReference type="PROSITE-ProRule" id="PRU00057"/>
    </source>
</evidence>
<evidence type="ECO:0000256" key="7">
    <source>
        <dbReference type="SAM" id="MobiDB-lite"/>
    </source>
</evidence>
<evidence type="ECO:0000312" key="8">
    <source>
        <dbReference type="EMBL" id="AAI18149.1"/>
    </source>
</evidence>
<comment type="function">
    <text evidence="3">Probably involved in the organization of the actin cytoskeleton. Induced membrane extensions in fibroblasts (By similarity).</text>
</comment>
<comment type="subunit">
    <text evidence="3">Interacts with RHOQ and CDC42, in a GTP-dependent manner.</text>
</comment>
<comment type="subcellular location">
    <subcellularLocation>
        <location evidence="1">Endomembrane system</location>
        <topology evidence="1">Peripheral membrane protein</topology>
    </subcellularLocation>
    <subcellularLocation>
        <location evidence="1">Cytoplasm</location>
        <location evidence="1">Cytoskeleton</location>
    </subcellularLocation>
</comment>
<comment type="domain">
    <text evidence="3">The CRIB domain mediates interaction with CDC42.</text>
</comment>
<comment type="similarity">
    <text evidence="5">Belongs to the BORG/CEP family.</text>
</comment>
<reference evidence="8" key="1">
    <citation type="submission" date="2006-06" db="EMBL/GenBank/DDBJ databases">
        <authorList>
            <consortium name="NIH - Mammalian Gene Collection (MGC) project"/>
        </authorList>
    </citation>
    <scope>NUCLEOTIDE SEQUENCE [LARGE SCALE MRNA]</scope>
    <source>
        <strain evidence="8">Hereford</strain>
        <tissue evidence="8">Ascending colon</tissue>
    </source>
</reference>